<proteinExistence type="inferred from homology"/>
<gene>
    <name evidence="1" type="primary">rpsC</name>
    <name type="ordered locus">Sputcn32_3753</name>
</gene>
<comment type="function">
    <text evidence="1">Binds the lower part of the 30S subunit head. Binds mRNA in the 70S ribosome, positioning it for translation.</text>
</comment>
<comment type="subunit">
    <text evidence="1">Part of the 30S ribosomal subunit. Forms a tight complex with proteins S10 and S14.</text>
</comment>
<comment type="similarity">
    <text evidence="1">Belongs to the universal ribosomal protein uS3 family.</text>
</comment>
<accession>A4YBX7</accession>
<reference key="1">
    <citation type="submission" date="2007-04" db="EMBL/GenBank/DDBJ databases">
        <title>Complete sequence of Shewanella putrefaciens CN-32.</title>
        <authorList>
            <consortium name="US DOE Joint Genome Institute"/>
            <person name="Copeland A."/>
            <person name="Lucas S."/>
            <person name="Lapidus A."/>
            <person name="Barry K."/>
            <person name="Detter J.C."/>
            <person name="Glavina del Rio T."/>
            <person name="Hammon N."/>
            <person name="Israni S."/>
            <person name="Dalin E."/>
            <person name="Tice H."/>
            <person name="Pitluck S."/>
            <person name="Chain P."/>
            <person name="Malfatti S."/>
            <person name="Shin M."/>
            <person name="Vergez L."/>
            <person name="Schmutz J."/>
            <person name="Larimer F."/>
            <person name="Land M."/>
            <person name="Hauser L."/>
            <person name="Kyrpides N."/>
            <person name="Mikhailova N."/>
            <person name="Romine M.F."/>
            <person name="Fredrickson J."/>
            <person name="Tiedje J."/>
            <person name="Richardson P."/>
        </authorList>
    </citation>
    <scope>NUCLEOTIDE SEQUENCE [LARGE SCALE GENOMIC DNA]</scope>
    <source>
        <strain>CN-32 / ATCC BAA-453</strain>
    </source>
</reference>
<dbReference type="EMBL" id="CP000681">
    <property type="protein sequence ID" value="ABP77460.1"/>
    <property type="molecule type" value="Genomic_DNA"/>
</dbReference>
<dbReference type="SMR" id="A4YBX7"/>
<dbReference type="STRING" id="319224.Sputcn32_3753"/>
<dbReference type="KEGG" id="spc:Sputcn32_3753"/>
<dbReference type="eggNOG" id="COG0092">
    <property type="taxonomic scope" value="Bacteria"/>
</dbReference>
<dbReference type="HOGENOM" id="CLU_058591_0_2_6"/>
<dbReference type="GO" id="GO:0022627">
    <property type="term" value="C:cytosolic small ribosomal subunit"/>
    <property type="evidence" value="ECO:0007669"/>
    <property type="project" value="TreeGrafter"/>
</dbReference>
<dbReference type="GO" id="GO:0003729">
    <property type="term" value="F:mRNA binding"/>
    <property type="evidence" value="ECO:0007669"/>
    <property type="project" value="UniProtKB-UniRule"/>
</dbReference>
<dbReference type="GO" id="GO:0019843">
    <property type="term" value="F:rRNA binding"/>
    <property type="evidence" value="ECO:0007669"/>
    <property type="project" value="UniProtKB-UniRule"/>
</dbReference>
<dbReference type="GO" id="GO:0003735">
    <property type="term" value="F:structural constituent of ribosome"/>
    <property type="evidence" value="ECO:0007669"/>
    <property type="project" value="InterPro"/>
</dbReference>
<dbReference type="GO" id="GO:0006412">
    <property type="term" value="P:translation"/>
    <property type="evidence" value="ECO:0007669"/>
    <property type="project" value="UniProtKB-UniRule"/>
</dbReference>
<dbReference type="CDD" id="cd02412">
    <property type="entry name" value="KH-II_30S_S3"/>
    <property type="match status" value="1"/>
</dbReference>
<dbReference type="FunFam" id="3.30.1140.32:FF:000001">
    <property type="entry name" value="30S ribosomal protein S3"/>
    <property type="match status" value="1"/>
</dbReference>
<dbReference type="FunFam" id="3.30.300.20:FF:000001">
    <property type="entry name" value="30S ribosomal protein S3"/>
    <property type="match status" value="1"/>
</dbReference>
<dbReference type="Gene3D" id="3.30.300.20">
    <property type="match status" value="1"/>
</dbReference>
<dbReference type="Gene3D" id="3.30.1140.32">
    <property type="entry name" value="Ribosomal protein S3, C-terminal domain"/>
    <property type="match status" value="1"/>
</dbReference>
<dbReference type="HAMAP" id="MF_01309_B">
    <property type="entry name" value="Ribosomal_uS3_B"/>
    <property type="match status" value="1"/>
</dbReference>
<dbReference type="InterPro" id="IPR004087">
    <property type="entry name" value="KH_dom"/>
</dbReference>
<dbReference type="InterPro" id="IPR015946">
    <property type="entry name" value="KH_dom-like_a/b"/>
</dbReference>
<dbReference type="InterPro" id="IPR004044">
    <property type="entry name" value="KH_dom_type_2"/>
</dbReference>
<dbReference type="InterPro" id="IPR009019">
    <property type="entry name" value="KH_sf_prok-type"/>
</dbReference>
<dbReference type="InterPro" id="IPR036419">
    <property type="entry name" value="Ribosomal_S3_C_sf"/>
</dbReference>
<dbReference type="InterPro" id="IPR005704">
    <property type="entry name" value="Ribosomal_uS3_bac-typ"/>
</dbReference>
<dbReference type="InterPro" id="IPR001351">
    <property type="entry name" value="Ribosomal_uS3_C"/>
</dbReference>
<dbReference type="InterPro" id="IPR018280">
    <property type="entry name" value="Ribosomal_uS3_CS"/>
</dbReference>
<dbReference type="NCBIfam" id="TIGR01009">
    <property type="entry name" value="rpsC_bact"/>
    <property type="match status" value="1"/>
</dbReference>
<dbReference type="PANTHER" id="PTHR11760">
    <property type="entry name" value="30S/40S RIBOSOMAL PROTEIN S3"/>
    <property type="match status" value="1"/>
</dbReference>
<dbReference type="PANTHER" id="PTHR11760:SF19">
    <property type="entry name" value="SMALL RIBOSOMAL SUBUNIT PROTEIN US3C"/>
    <property type="match status" value="1"/>
</dbReference>
<dbReference type="Pfam" id="PF07650">
    <property type="entry name" value="KH_2"/>
    <property type="match status" value="1"/>
</dbReference>
<dbReference type="Pfam" id="PF00189">
    <property type="entry name" value="Ribosomal_S3_C"/>
    <property type="match status" value="1"/>
</dbReference>
<dbReference type="SMART" id="SM00322">
    <property type="entry name" value="KH"/>
    <property type="match status" value="1"/>
</dbReference>
<dbReference type="SUPFAM" id="SSF54814">
    <property type="entry name" value="Prokaryotic type KH domain (KH-domain type II)"/>
    <property type="match status" value="1"/>
</dbReference>
<dbReference type="SUPFAM" id="SSF54821">
    <property type="entry name" value="Ribosomal protein S3 C-terminal domain"/>
    <property type="match status" value="1"/>
</dbReference>
<dbReference type="PROSITE" id="PS50823">
    <property type="entry name" value="KH_TYPE_2"/>
    <property type="match status" value="1"/>
</dbReference>
<dbReference type="PROSITE" id="PS00548">
    <property type="entry name" value="RIBOSOMAL_S3"/>
    <property type="match status" value="1"/>
</dbReference>
<keyword id="KW-0687">Ribonucleoprotein</keyword>
<keyword id="KW-0689">Ribosomal protein</keyword>
<keyword id="KW-0694">RNA-binding</keyword>
<keyword id="KW-0699">rRNA-binding</keyword>
<evidence type="ECO:0000255" key="1">
    <source>
        <dbReference type="HAMAP-Rule" id="MF_01309"/>
    </source>
</evidence>
<evidence type="ECO:0000305" key="2"/>
<name>RS3_SHEPC</name>
<protein>
    <recommendedName>
        <fullName evidence="1">Small ribosomal subunit protein uS3</fullName>
    </recommendedName>
    <alternativeName>
        <fullName evidence="2">30S ribosomal protein S3</fullName>
    </alternativeName>
</protein>
<feature type="chain" id="PRO_1000086160" description="Small ribosomal subunit protein uS3">
    <location>
        <begin position="1"/>
        <end position="230"/>
    </location>
</feature>
<feature type="domain" description="KH type-2" evidence="1">
    <location>
        <begin position="39"/>
        <end position="107"/>
    </location>
</feature>
<organism>
    <name type="scientific">Shewanella putrefaciens (strain CN-32 / ATCC BAA-453)</name>
    <dbReference type="NCBI Taxonomy" id="319224"/>
    <lineage>
        <taxon>Bacteria</taxon>
        <taxon>Pseudomonadati</taxon>
        <taxon>Pseudomonadota</taxon>
        <taxon>Gammaproteobacteria</taxon>
        <taxon>Alteromonadales</taxon>
        <taxon>Shewanellaceae</taxon>
        <taxon>Shewanella</taxon>
    </lineage>
</organism>
<sequence>MGQKVHPNGIRLGITKPWISTWYADKSDYANNLNSDWEVRKFLVEKLQAASVSKIVIERPAKSIRVTIHTARPGVVIGKKGEDVEVLRAAVSKLAGTPAQINIAEIRKPELDAKLVADSIAQQLERRVMFRRAMKRAVQNAMRIGAQGIKVQVSGRLGGAEIARDEWYREGRVPLHTLRADIDYSTSESHTQYGVIGVKVWIFKGEVLDGMLPQIEEPKQQQPKRKPRGK</sequence>